<accession>Q6IF99</accession>
<keyword id="KW-1003">Cell membrane</keyword>
<keyword id="KW-0297">G-protein coupled receptor</keyword>
<keyword id="KW-0325">Glycoprotein</keyword>
<keyword id="KW-0472">Membrane</keyword>
<keyword id="KW-0552">Olfaction</keyword>
<keyword id="KW-0675">Receptor</keyword>
<keyword id="KW-1185">Reference proteome</keyword>
<keyword id="KW-0716">Sensory transduction</keyword>
<keyword id="KW-0807">Transducer</keyword>
<keyword id="KW-0812">Transmembrane</keyword>
<keyword id="KW-1133">Transmembrane helix</keyword>
<name>O10K2_HUMAN</name>
<organism>
    <name type="scientific">Homo sapiens</name>
    <name type="common">Human</name>
    <dbReference type="NCBI Taxonomy" id="9606"/>
    <lineage>
        <taxon>Eukaryota</taxon>
        <taxon>Metazoa</taxon>
        <taxon>Chordata</taxon>
        <taxon>Craniata</taxon>
        <taxon>Vertebrata</taxon>
        <taxon>Euteleostomi</taxon>
        <taxon>Mammalia</taxon>
        <taxon>Eutheria</taxon>
        <taxon>Euarchontoglires</taxon>
        <taxon>Primates</taxon>
        <taxon>Haplorrhini</taxon>
        <taxon>Catarrhini</taxon>
        <taxon>Hominidae</taxon>
        <taxon>Homo</taxon>
    </lineage>
</organism>
<sequence length="312" mass="35029">MERVNETVVREVIFLGFSSLARLQQLLFVIFLLLYLFTLGTNAIIISTIVLDRALHIPMYFFLAILSCSEICYTFIIVPKMLVDLLSQKKTISFLGCAIQMFSFLFLGCSHSFLLAVMGYDRYIAICNPLRYSVLMGHGVCMGLVAAACACGFTVAQIITSLVFHLPFYSSNQLHHFFCDIAPVLKLASHHNHFSQIVIFMLCTLVLAIPLLLILVSYVHILSAILQFPSTLGRCKAFSTCVSHLIIVTVHYGCASFIYLRPQSNYSSSQDALISVSYTIITPLFNPMIYSLRNKEFKSALCKIVRRTISLL</sequence>
<gene>
    <name type="primary">OR10K2</name>
</gene>
<protein>
    <recommendedName>
        <fullName>Olfactory receptor 10K2</fullName>
    </recommendedName>
    <alternativeName>
        <fullName>Olfactory receptor OR1-4</fullName>
    </alternativeName>
</protein>
<dbReference type="EMBL" id="AL121986">
    <property type="status" value="NOT_ANNOTATED_CDS"/>
    <property type="molecule type" value="Genomic_DNA"/>
</dbReference>
<dbReference type="EMBL" id="BK004363">
    <property type="protein sequence ID" value="DAA04761.1"/>
    <property type="molecule type" value="Genomic_DNA"/>
</dbReference>
<dbReference type="CCDS" id="CCDS30896.1"/>
<dbReference type="RefSeq" id="NP_001004476.1">
    <property type="nucleotide sequence ID" value="NM_001004476.2"/>
</dbReference>
<dbReference type="SMR" id="Q6IF99"/>
<dbReference type="FunCoup" id="Q6IF99">
    <property type="interactions" value="417"/>
</dbReference>
<dbReference type="STRING" id="9606.ENSP00000493297"/>
<dbReference type="GlyCosmos" id="Q6IF99">
    <property type="glycosylation" value="2 sites, No reported glycans"/>
</dbReference>
<dbReference type="GlyGen" id="Q6IF99">
    <property type="glycosylation" value="2 sites"/>
</dbReference>
<dbReference type="BioMuta" id="OR10K2"/>
<dbReference type="DMDM" id="74762319"/>
<dbReference type="PaxDb" id="9606-ENSP00000324251"/>
<dbReference type="Antibodypedia" id="72171">
    <property type="antibodies" value="14 antibodies from 9 providers"/>
</dbReference>
<dbReference type="DNASU" id="391107"/>
<dbReference type="Ensembl" id="ENST00000641042.1">
    <property type="protein sequence ID" value="ENSP00000493297.1"/>
    <property type="gene ID" value="ENSG00000180708.6"/>
</dbReference>
<dbReference type="GeneID" id="391107"/>
<dbReference type="KEGG" id="hsa:391107"/>
<dbReference type="MANE-Select" id="ENST00000641042.1">
    <property type="protein sequence ID" value="ENSP00000493297.1"/>
    <property type="RefSeq nucleotide sequence ID" value="NM_001004476.2"/>
    <property type="RefSeq protein sequence ID" value="NP_001004476.1"/>
</dbReference>
<dbReference type="UCSC" id="uc010pii.2">
    <property type="organism name" value="human"/>
</dbReference>
<dbReference type="AGR" id="HGNC:14826"/>
<dbReference type="CTD" id="391107"/>
<dbReference type="GeneCards" id="OR10K2"/>
<dbReference type="HGNC" id="HGNC:14826">
    <property type="gene designation" value="OR10K2"/>
</dbReference>
<dbReference type="HPA" id="ENSG00000180708">
    <property type="expression patterns" value="Not detected"/>
</dbReference>
<dbReference type="neXtProt" id="NX_Q6IF99"/>
<dbReference type="OpenTargets" id="ENSG00000180708"/>
<dbReference type="PharmGKB" id="PA31989"/>
<dbReference type="VEuPathDB" id="HostDB:ENSG00000180708"/>
<dbReference type="eggNOG" id="ENOG502QSAJ">
    <property type="taxonomic scope" value="Eukaryota"/>
</dbReference>
<dbReference type="GeneTree" id="ENSGT00940000164339"/>
<dbReference type="HOGENOM" id="CLU_012526_1_2_1"/>
<dbReference type="InParanoid" id="Q6IF99"/>
<dbReference type="OMA" id="IFMLCTL"/>
<dbReference type="OrthoDB" id="9975554at2759"/>
<dbReference type="PAN-GO" id="Q6IF99">
    <property type="GO annotations" value="4 GO annotations based on evolutionary models"/>
</dbReference>
<dbReference type="PhylomeDB" id="Q6IF99"/>
<dbReference type="TreeFam" id="TF337249"/>
<dbReference type="PathwayCommons" id="Q6IF99"/>
<dbReference type="Reactome" id="R-HSA-9752946">
    <property type="pathway name" value="Expression and translocation of olfactory receptors"/>
</dbReference>
<dbReference type="SignaLink" id="Q6IF99"/>
<dbReference type="BioGRID-ORCS" id="391107">
    <property type="hits" value="8 hits in 741 CRISPR screens"/>
</dbReference>
<dbReference type="GeneWiki" id="OR10K2"/>
<dbReference type="GenomeRNAi" id="391107"/>
<dbReference type="Pharos" id="Q6IF99">
    <property type="development level" value="Tdark"/>
</dbReference>
<dbReference type="PRO" id="PR:Q6IF99"/>
<dbReference type="Proteomes" id="UP000005640">
    <property type="component" value="Chromosome 1"/>
</dbReference>
<dbReference type="RNAct" id="Q6IF99">
    <property type="molecule type" value="protein"/>
</dbReference>
<dbReference type="ExpressionAtlas" id="Q6IF99">
    <property type="expression patterns" value="baseline and differential"/>
</dbReference>
<dbReference type="GO" id="GO:0016020">
    <property type="term" value="C:membrane"/>
    <property type="evidence" value="ECO:0000318"/>
    <property type="project" value="GO_Central"/>
</dbReference>
<dbReference type="GO" id="GO:0005886">
    <property type="term" value="C:plasma membrane"/>
    <property type="evidence" value="ECO:0007669"/>
    <property type="project" value="UniProtKB-SubCell"/>
</dbReference>
<dbReference type="GO" id="GO:0004930">
    <property type="term" value="F:G protein-coupled receptor activity"/>
    <property type="evidence" value="ECO:0007669"/>
    <property type="project" value="UniProtKB-KW"/>
</dbReference>
<dbReference type="GO" id="GO:0005549">
    <property type="term" value="F:odorant binding"/>
    <property type="evidence" value="ECO:0000318"/>
    <property type="project" value="GO_Central"/>
</dbReference>
<dbReference type="GO" id="GO:0004984">
    <property type="term" value="F:olfactory receptor activity"/>
    <property type="evidence" value="ECO:0000318"/>
    <property type="project" value="GO_Central"/>
</dbReference>
<dbReference type="GO" id="GO:0050911">
    <property type="term" value="P:detection of chemical stimulus involved in sensory perception of smell"/>
    <property type="evidence" value="ECO:0000318"/>
    <property type="project" value="GO_Central"/>
</dbReference>
<dbReference type="CDD" id="cd15225">
    <property type="entry name" value="7tmA_OR10A-like"/>
    <property type="match status" value="1"/>
</dbReference>
<dbReference type="FunFam" id="1.10.1220.70:FF:000001">
    <property type="entry name" value="Olfactory receptor"/>
    <property type="match status" value="1"/>
</dbReference>
<dbReference type="FunFam" id="1.20.1070.10:FF:000151">
    <property type="entry name" value="olfactory receptor 10K1-like"/>
    <property type="match status" value="1"/>
</dbReference>
<dbReference type="Gene3D" id="1.20.1070.10">
    <property type="entry name" value="Rhodopsin 7-helix transmembrane proteins"/>
    <property type="match status" value="1"/>
</dbReference>
<dbReference type="InterPro" id="IPR000276">
    <property type="entry name" value="GPCR_Rhodpsn"/>
</dbReference>
<dbReference type="InterPro" id="IPR017452">
    <property type="entry name" value="GPCR_Rhodpsn_7TM"/>
</dbReference>
<dbReference type="InterPro" id="IPR000725">
    <property type="entry name" value="Olfact_rcpt"/>
</dbReference>
<dbReference type="PANTHER" id="PTHR26453">
    <property type="entry name" value="OLFACTORY RECEPTOR"/>
    <property type="match status" value="1"/>
</dbReference>
<dbReference type="Pfam" id="PF13853">
    <property type="entry name" value="7tm_4"/>
    <property type="match status" value="1"/>
</dbReference>
<dbReference type="PRINTS" id="PR00237">
    <property type="entry name" value="GPCRRHODOPSN"/>
</dbReference>
<dbReference type="PRINTS" id="PR00245">
    <property type="entry name" value="OLFACTORYR"/>
</dbReference>
<dbReference type="SUPFAM" id="SSF81321">
    <property type="entry name" value="Family A G protein-coupled receptor-like"/>
    <property type="match status" value="1"/>
</dbReference>
<dbReference type="PROSITE" id="PS50262">
    <property type="entry name" value="G_PROTEIN_RECEP_F1_2"/>
    <property type="match status" value="1"/>
</dbReference>
<proteinExistence type="inferred from homology"/>
<feature type="chain" id="PRO_0000150712" description="Olfactory receptor 10K2">
    <location>
        <begin position="1"/>
        <end position="312"/>
    </location>
</feature>
<feature type="topological domain" description="Extracellular" evidence="1">
    <location>
        <begin position="1"/>
        <end position="25"/>
    </location>
</feature>
<feature type="transmembrane region" description="Helical; Name=1" evidence="1">
    <location>
        <begin position="26"/>
        <end position="46"/>
    </location>
</feature>
<feature type="topological domain" description="Cytoplasmic" evidence="1">
    <location>
        <begin position="47"/>
        <end position="54"/>
    </location>
</feature>
<feature type="transmembrane region" description="Helical; Name=2" evidence="1">
    <location>
        <begin position="55"/>
        <end position="75"/>
    </location>
</feature>
<feature type="topological domain" description="Extracellular" evidence="1">
    <location>
        <begin position="76"/>
        <end position="99"/>
    </location>
</feature>
<feature type="transmembrane region" description="Helical; Name=3" evidence="1">
    <location>
        <begin position="100"/>
        <end position="120"/>
    </location>
</feature>
<feature type="topological domain" description="Cytoplasmic" evidence="1">
    <location>
        <begin position="121"/>
        <end position="139"/>
    </location>
</feature>
<feature type="transmembrane region" description="Helical; Name=4" evidence="1">
    <location>
        <begin position="140"/>
        <end position="160"/>
    </location>
</feature>
<feature type="topological domain" description="Extracellular" evidence="1">
    <location>
        <begin position="161"/>
        <end position="197"/>
    </location>
</feature>
<feature type="transmembrane region" description="Helical; Name=5" evidence="1">
    <location>
        <begin position="198"/>
        <end position="217"/>
    </location>
</feature>
<feature type="topological domain" description="Cytoplasmic" evidence="1">
    <location>
        <begin position="218"/>
        <end position="237"/>
    </location>
</feature>
<feature type="transmembrane region" description="Helical; Name=6" evidence="1">
    <location>
        <begin position="238"/>
        <end position="258"/>
    </location>
</feature>
<feature type="topological domain" description="Extracellular" evidence="1">
    <location>
        <begin position="259"/>
        <end position="271"/>
    </location>
</feature>
<feature type="transmembrane region" description="Helical; Name=7" evidence="1">
    <location>
        <begin position="272"/>
        <end position="292"/>
    </location>
</feature>
<feature type="topological domain" description="Cytoplasmic" evidence="1">
    <location>
        <begin position="293"/>
        <end position="312"/>
    </location>
</feature>
<feature type="glycosylation site" description="N-linked (GlcNAc...) asparagine" evidence="1">
    <location>
        <position position="5"/>
    </location>
</feature>
<feature type="glycosylation site" description="N-linked (GlcNAc...) asparagine" evidence="1">
    <location>
        <position position="265"/>
    </location>
</feature>
<feature type="sequence variant" id="VAR_053283" description="In dbSNP:rs12240099.">
    <original>A</original>
    <variation>T</variation>
    <location>
        <position position="208"/>
    </location>
</feature>
<evidence type="ECO:0000255" key="1"/>
<evidence type="ECO:0000255" key="2">
    <source>
        <dbReference type="PROSITE-ProRule" id="PRU00521"/>
    </source>
</evidence>
<evidence type="ECO:0000305" key="3"/>
<comment type="function">
    <text evidence="3">Odorant receptor.</text>
</comment>
<comment type="subcellular location">
    <subcellularLocation>
        <location>Cell membrane</location>
        <topology>Multi-pass membrane protein</topology>
    </subcellularLocation>
</comment>
<comment type="similarity">
    <text evidence="2">Belongs to the G-protein coupled receptor 1 family.</text>
</comment>
<comment type="online information" name="Human Olfactory Receptor Data Exploratorium (HORDE)">
    <link uri="http://genome.weizmann.ac.il/horde/card/index/symbol:OR10K2"/>
</comment>
<reference key="1">
    <citation type="journal article" date="2006" name="Nature">
        <title>The DNA sequence and biological annotation of human chromosome 1.</title>
        <authorList>
            <person name="Gregory S.G."/>
            <person name="Barlow K.F."/>
            <person name="McLay K.E."/>
            <person name="Kaul R."/>
            <person name="Swarbreck D."/>
            <person name="Dunham A."/>
            <person name="Scott C.E."/>
            <person name="Howe K.L."/>
            <person name="Woodfine K."/>
            <person name="Spencer C.C.A."/>
            <person name="Jones M.C."/>
            <person name="Gillson C."/>
            <person name="Searle S."/>
            <person name="Zhou Y."/>
            <person name="Kokocinski F."/>
            <person name="McDonald L."/>
            <person name="Evans R."/>
            <person name="Phillips K."/>
            <person name="Atkinson A."/>
            <person name="Cooper R."/>
            <person name="Jones C."/>
            <person name="Hall R.E."/>
            <person name="Andrews T.D."/>
            <person name="Lloyd C."/>
            <person name="Ainscough R."/>
            <person name="Almeida J.P."/>
            <person name="Ambrose K.D."/>
            <person name="Anderson F."/>
            <person name="Andrew R.W."/>
            <person name="Ashwell R.I.S."/>
            <person name="Aubin K."/>
            <person name="Babbage A.K."/>
            <person name="Bagguley C.L."/>
            <person name="Bailey J."/>
            <person name="Beasley H."/>
            <person name="Bethel G."/>
            <person name="Bird C.P."/>
            <person name="Bray-Allen S."/>
            <person name="Brown J.Y."/>
            <person name="Brown A.J."/>
            <person name="Buckley D."/>
            <person name="Burton J."/>
            <person name="Bye J."/>
            <person name="Carder C."/>
            <person name="Chapman J.C."/>
            <person name="Clark S.Y."/>
            <person name="Clarke G."/>
            <person name="Clee C."/>
            <person name="Cobley V."/>
            <person name="Collier R.E."/>
            <person name="Corby N."/>
            <person name="Coville G.J."/>
            <person name="Davies J."/>
            <person name="Deadman R."/>
            <person name="Dunn M."/>
            <person name="Earthrowl M."/>
            <person name="Ellington A.G."/>
            <person name="Errington H."/>
            <person name="Frankish A."/>
            <person name="Frankland J."/>
            <person name="French L."/>
            <person name="Garner P."/>
            <person name="Garnett J."/>
            <person name="Gay L."/>
            <person name="Ghori M.R.J."/>
            <person name="Gibson R."/>
            <person name="Gilby L.M."/>
            <person name="Gillett W."/>
            <person name="Glithero R.J."/>
            <person name="Grafham D.V."/>
            <person name="Griffiths C."/>
            <person name="Griffiths-Jones S."/>
            <person name="Grocock R."/>
            <person name="Hammond S."/>
            <person name="Harrison E.S.I."/>
            <person name="Hart E."/>
            <person name="Haugen E."/>
            <person name="Heath P.D."/>
            <person name="Holmes S."/>
            <person name="Holt K."/>
            <person name="Howden P.J."/>
            <person name="Hunt A.R."/>
            <person name="Hunt S.E."/>
            <person name="Hunter G."/>
            <person name="Isherwood J."/>
            <person name="James R."/>
            <person name="Johnson C."/>
            <person name="Johnson D."/>
            <person name="Joy A."/>
            <person name="Kay M."/>
            <person name="Kershaw J.K."/>
            <person name="Kibukawa M."/>
            <person name="Kimberley A.M."/>
            <person name="King A."/>
            <person name="Knights A.J."/>
            <person name="Lad H."/>
            <person name="Laird G."/>
            <person name="Lawlor S."/>
            <person name="Leongamornlert D.A."/>
            <person name="Lloyd D.M."/>
            <person name="Loveland J."/>
            <person name="Lovell J."/>
            <person name="Lush M.J."/>
            <person name="Lyne R."/>
            <person name="Martin S."/>
            <person name="Mashreghi-Mohammadi M."/>
            <person name="Matthews L."/>
            <person name="Matthews N.S.W."/>
            <person name="McLaren S."/>
            <person name="Milne S."/>
            <person name="Mistry S."/>
            <person name="Moore M.J.F."/>
            <person name="Nickerson T."/>
            <person name="O'Dell C.N."/>
            <person name="Oliver K."/>
            <person name="Palmeiri A."/>
            <person name="Palmer S.A."/>
            <person name="Parker A."/>
            <person name="Patel D."/>
            <person name="Pearce A.V."/>
            <person name="Peck A.I."/>
            <person name="Pelan S."/>
            <person name="Phelps K."/>
            <person name="Phillimore B.J."/>
            <person name="Plumb R."/>
            <person name="Rajan J."/>
            <person name="Raymond C."/>
            <person name="Rouse G."/>
            <person name="Saenphimmachak C."/>
            <person name="Sehra H.K."/>
            <person name="Sheridan E."/>
            <person name="Shownkeen R."/>
            <person name="Sims S."/>
            <person name="Skuce C.D."/>
            <person name="Smith M."/>
            <person name="Steward C."/>
            <person name="Subramanian S."/>
            <person name="Sycamore N."/>
            <person name="Tracey A."/>
            <person name="Tromans A."/>
            <person name="Van Helmond Z."/>
            <person name="Wall M."/>
            <person name="Wallis J.M."/>
            <person name="White S."/>
            <person name="Whitehead S.L."/>
            <person name="Wilkinson J.E."/>
            <person name="Willey D.L."/>
            <person name="Williams H."/>
            <person name="Wilming L."/>
            <person name="Wray P.W."/>
            <person name="Wu Z."/>
            <person name="Coulson A."/>
            <person name="Vaudin M."/>
            <person name="Sulston J.E."/>
            <person name="Durbin R.M."/>
            <person name="Hubbard T."/>
            <person name="Wooster R."/>
            <person name="Dunham I."/>
            <person name="Carter N.P."/>
            <person name="McVean G."/>
            <person name="Ross M.T."/>
            <person name="Harrow J."/>
            <person name="Olson M.V."/>
            <person name="Beck S."/>
            <person name="Rogers J."/>
            <person name="Bentley D.R."/>
        </authorList>
    </citation>
    <scope>NUCLEOTIDE SEQUENCE [LARGE SCALE GENOMIC DNA]</scope>
</reference>
<reference key="2">
    <citation type="journal article" date="2004" name="Proc. Natl. Acad. Sci. U.S.A.">
        <title>The human olfactory receptor gene family.</title>
        <authorList>
            <person name="Malnic B."/>
            <person name="Godfrey P.A."/>
            <person name="Buck L.B."/>
        </authorList>
    </citation>
    <scope>IDENTIFICATION</scope>
</reference>
<reference key="3">
    <citation type="journal article" date="2004" name="Proc. Natl. Acad. Sci. U.S.A.">
        <authorList>
            <person name="Malnic B."/>
            <person name="Godfrey P.A."/>
            <person name="Buck L.B."/>
        </authorList>
    </citation>
    <scope>ERRATUM OF PUBMED:14983052</scope>
</reference>